<proteinExistence type="evidence at protein level"/>
<gene>
    <name evidence="3" type="primary">LOX</name>
</gene>
<sequence length="249" mass="29073">DDPYNPYKYSDDNPYYNYYXXXERPRPGSRYRPGYGTGYFQYGLPDLVPDPYYIQASTYVQKMSMYNLRCAAEENCLASTAYRADVRDYDHRVLLRFPQRVKNQGTSDFLPSRPRYSWEWHSCHQHYHSMDEFSHYDLLDASTQRRVAEGHKASFCLEDTSCDYGYHRRFACTAHTQGLSPGCYDTYNADIDCQWIDITDVKPGNYILKVSVNPSYLVPESDYSNNVVRCEIRYTGHHAYASGCTISPY</sequence>
<keyword id="KW-0186">Copper</keyword>
<keyword id="KW-0903">Direct protein sequencing</keyword>
<keyword id="KW-1015">Disulfide bond</keyword>
<keyword id="KW-0886">LTQ</keyword>
<keyword id="KW-0479">Metal-binding</keyword>
<keyword id="KW-0560">Oxidoreductase</keyword>
<keyword id="KW-1185">Reference proteome</keyword>
<keyword id="KW-0964">Secreted</keyword>
<keyword id="KW-0765">Sulfation</keyword>
<keyword id="KW-0801">TPQ</keyword>
<accession>P45845</accession>
<accession>Q7M3F0</accession>
<comment type="function">
    <text evidence="4">Responsible for the post-translational oxidative deamination of peptidyl lysine residues in precursors to fibrous collagen and elastin. Regulator of Ras expression. May play a role in tumor suppression. Plays a role in the aortic wall architecture (By similarity).</text>
</comment>
<comment type="catalytic activity">
    <reaction evidence="4">
        <text>L-lysyl-[protein] + O2 + H2O = (S)-2-amino-6-oxohexanoyl-[protein] + H2O2 + NH4(+)</text>
        <dbReference type="Rhea" id="RHEA:24544"/>
        <dbReference type="Rhea" id="RHEA-COMP:9752"/>
        <dbReference type="Rhea" id="RHEA-COMP:12448"/>
        <dbReference type="ChEBI" id="CHEBI:15377"/>
        <dbReference type="ChEBI" id="CHEBI:15379"/>
        <dbReference type="ChEBI" id="CHEBI:16240"/>
        <dbReference type="ChEBI" id="CHEBI:28938"/>
        <dbReference type="ChEBI" id="CHEBI:29969"/>
        <dbReference type="ChEBI" id="CHEBI:131803"/>
        <dbReference type="EC" id="1.4.3.13"/>
    </reaction>
</comment>
<comment type="cofactor">
    <cofactor evidence="2">
        <name>Cu cation</name>
        <dbReference type="ChEBI" id="CHEBI:23378"/>
    </cofactor>
</comment>
<comment type="cofactor">
    <cofactor evidence="5">
        <name>lysine tyrosylquinone residue</name>
        <dbReference type="ChEBI" id="CHEBI:20489"/>
    </cofactor>
    <text evidence="5">Contains 1 lysine tyrosylquinone.</text>
</comment>
<comment type="subunit">
    <text evidence="3">Interacts with MFAP4. Interacts (via propeptide) with EFEMP2; this interaction is strong and facilitates formation of ternary complexes with ELN during elastic fiber assembly; this interaction limits interaction of EFEMP2 with FBLN5.</text>
</comment>
<comment type="subcellular location">
    <subcellularLocation>
        <location evidence="4">Secreted</location>
    </subcellularLocation>
    <subcellularLocation>
        <location>Secreted</location>
        <location>Extracellular space</location>
    </subcellularLocation>
</comment>
<comment type="PTM">
    <text evidence="5">The lysine tyrosylquinone cross-link (LTQ) is generated by condensation of the epsilon-amino group of a lysine with a topaquinone produced by oxidation of tyrosine.</text>
</comment>
<comment type="PTM">
    <text evidence="3 4">Proteolytically cleaved by BMP1 which removes the propeptide (By similarity). Also proteolytically cleaved by ADAMTS2 and ADAMTS14, but not by ADAMTS3, at an additional cleavage site downstream of the BMP1 cleavage site (By similarity). The propeptide plays a role in directing the deposition of this enzyme to elastic fibers, via interaction with tropoelastin (By similarity). Cleavage by BMP1 to remove the propeptide does not increase enzymatic activity but increases binding to collagen (By similarity). Cleavage by ADAMTS2 produces a form with reduced collagen-binding activity (By similarity).</text>
</comment>
<comment type="PTM">
    <text evidence="3">Sulfated at Tyr-19 and also at either Tyr-15 or Tyr-16 which enhances binding to collagen.</text>
</comment>
<comment type="mass spectrometry" mass="29377.0" method="MALDI" evidence="7">
    <molecule>Protein-lysine 6-oxidase, long form</molecule>
</comment>
<comment type="similarity">
    <text evidence="8">Belongs to the lysyl oxidase family.</text>
</comment>
<name>LYOX_PIG</name>
<protein>
    <recommendedName>
        <fullName evidence="3">Protein-lysine 6-oxidase</fullName>
        <ecNumber evidence="3">1.4.3.13</ecNumber>
    </recommendedName>
    <alternativeName>
        <fullName>Lysyl oxidase</fullName>
    </alternativeName>
    <component>
        <recommendedName>
            <fullName evidence="3">Protein-lysine 6-oxidase, long form</fullName>
        </recommendedName>
    </component>
    <component>
        <recommendedName>
            <fullName evidence="3">Protein-lysine 6-oxidase, short form</fullName>
        </recommendedName>
    </component>
</protein>
<feature type="chain" id="PRO_0000156409" description="Protein-lysine 6-oxidase, long form" evidence="2">
    <location>
        <begin position="1"/>
        <end position="249"/>
    </location>
</feature>
<feature type="chain" id="PRO_0000447887" description="Protein-lysine 6-oxidase, short form" evidence="3">
    <location>
        <begin position="51"/>
        <end position="249"/>
    </location>
</feature>
<feature type="region of interest" description="Lysyl-oxidase like" evidence="1">
    <location>
        <begin position="45"/>
        <end position="249"/>
    </location>
</feature>
<feature type="binding site" evidence="6">
    <location>
        <position position="124"/>
    </location>
    <ligand>
        <name>Cu cation</name>
        <dbReference type="ChEBI" id="CHEBI:23378"/>
    </ligand>
</feature>
<feature type="binding site" evidence="6">
    <location>
        <position position="126"/>
    </location>
    <ligand>
        <name>Cu cation</name>
        <dbReference type="ChEBI" id="CHEBI:23378"/>
    </ligand>
</feature>
<feature type="binding site" evidence="6">
    <location>
        <position position="128"/>
    </location>
    <ligand>
        <name>Cu cation</name>
        <dbReference type="ChEBI" id="CHEBI:23378"/>
    </ligand>
</feature>
<feature type="site" description="Cleavage; by ADAMTS2 and ADAMTS14" evidence="3">
    <location>
        <begin position="50"/>
        <end position="51"/>
    </location>
</feature>
<feature type="modified residue" description="Sulfotyrosine" evidence="3">
    <location>
        <position position="19"/>
    </location>
</feature>
<feature type="modified residue" description="2',4',5'-topaquinone" evidence="5">
    <location>
        <position position="187"/>
    </location>
</feature>
<feature type="disulfide bond" evidence="5">
    <location>
        <begin position="70"/>
        <end position="76"/>
    </location>
</feature>
<feature type="disulfide bond" evidence="5">
    <location>
        <begin position="123"/>
        <end position="172"/>
    </location>
</feature>
<feature type="disulfide bond" evidence="5">
    <location>
        <begin position="156"/>
        <end position="162"/>
    </location>
</feature>
<feature type="disulfide bond" evidence="5">
    <location>
        <begin position="183"/>
        <end position="193"/>
    </location>
</feature>
<feature type="disulfide bond" evidence="5">
    <location>
        <begin position="230"/>
        <end position="244"/>
    </location>
</feature>
<feature type="cross-link" description="Lysine tyrosylquinone (Lys-Tyr)" evidence="5">
    <location>
        <begin position="152"/>
        <end position="187"/>
    </location>
</feature>
<feature type="sequence conflict" description="In Ref. 2; AA sequence." evidence="8" ref="2">
    <original>H</original>
    <variation>S</variation>
    <location>
        <position position="121"/>
    </location>
</feature>
<feature type="sequence conflict" description="In Ref. 2; AA sequence." evidence="8" ref="2">
    <original>L</original>
    <variation>K</variation>
    <location>
        <position position="157"/>
    </location>
</feature>
<reference key="1">
    <citation type="submission" date="2007-03" db="UniProtKB">
        <authorList>
            <person name="Cronshaw A.D."/>
            <person name="Hulmes D.J.S."/>
        </authorList>
    </citation>
    <scope>PROTEIN SEQUENCE</scope>
</reference>
<reference key="2">
    <citation type="journal article" date="1995" name="Biochem. J.">
        <title>The proteolytic processing site of the precursor of lysyl oxidase.</title>
        <authorList>
            <person name="Cronshaw A.D."/>
            <person name="Fothergill-Gilmore L.A."/>
            <person name="Hulmes D.J.S."/>
        </authorList>
    </citation>
    <scope>PROTEIN SEQUENCE OF 1-19; 23-44; 49-121 AND 131-184</scope>
    <scope>MASS SPECTROMETRY</scope>
    <source>
        <tissue>Skin</tissue>
    </source>
</reference>
<reference key="3">
    <citation type="journal article" date="1993" name="Matrix">
        <title>TRAMP (tyrosine rich acidic matrix protein), a protein that co-purifies with lysyl oxidase from porcine skin. Identification of TRAMP as the dermatan sulphate proteoglycan-associated 22K extracellular matrix protein.</title>
        <authorList>
            <person name="Cronshaw A.D."/>
            <person name="Macbeath J.R.E."/>
            <person name="Shackleton D.R."/>
            <person name="Collins J.F."/>
            <person name="Fothergill-Gilmore L.A."/>
            <person name="Hulmes D.J.S."/>
        </authorList>
    </citation>
    <scope>PROTEIN SEQUENCE OF 131-166</scope>
    <source>
        <tissue>Skin</tissue>
    </source>
</reference>
<evidence type="ECO:0000250" key="1"/>
<evidence type="ECO:0000250" key="2">
    <source>
        <dbReference type="UniProtKB" id="P16636"/>
    </source>
</evidence>
<evidence type="ECO:0000250" key="3">
    <source>
        <dbReference type="UniProtKB" id="P28300"/>
    </source>
</evidence>
<evidence type="ECO:0000250" key="4">
    <source>
        <dbReference type="UniProtKB" id="P28301"/>
    </source>
</evidence>
<evidence type="ECO:0000250" key="5">
    <source>
        <dbReference type="UniProtKB" id="P33072"/>
    </source>
</evidence>
<evidence type="ECO:0000255" key="6"/>
<evidence type="ECO:0000269" key="7">
    <source>
    </source>
</evidence>
<evidence type="ECO:0000305" key="8"/>
<dbReference type="EC" id="1.4.3.13" evidence="3"/>
<dbReference type="PIR" id="S54337">
    <property type="entry name" value="S54337"/>
</dbReference>
<dbReference type="STRING" id="9823.ENSSSCP00000015138"/>
<dbReference type="BindingDB" id="P45845"/>
<dbReference type="ChEMBL" id="CHEMBL3112375"/>
<dbReference type="PaxDb" id="9823-ENSSSCP00000015138"/>
<dbReference type="PeptideAtlas" id="P45845"/>
<dbReference type="eggNOG" id="ENOG502QWQR">
    <property type="taxonomic scope" value="Eukaryota"/>
</dbReference>
<dbReference type="InParanoid" id="P45845"/>
<dbReference type="BRENDA" id="1.4.3.13">
    <property type="organism ID" value="6170"/>
</dbReference>
<dbReference type="Proteomes" id="UP000008227">
    <property type="component" value="Unplaced"/>
</dbReference>
<dbReference type="Proteomes" id="UP000314985">
    <property type="component" value="Unplaced"/>
</dbReference>
<dbReference type="Proteomes" id="UP000694570">
    <property type="component" value="Unplaced"/>
</dbReference>
<dbReference type="Proteomes" id="UP000694571">
    <property type="component" value="Unplaced"/>
</dbReference>
<dbReference type="Proteomes" id="UP000694720">
    <property type="component" value="Unplaced"/>
</dbReference>
<dbReference type="Proteomes" id="UP000694722">
    <property type="component" value="Unplaced"/>
</dbReference>
<dbReference type="Proteomes" id="UP000694723">
    <property type="component" value="Unplaced"/>
</dbReference>
<dbReference type="Proteomes" id="UP000694724">
    <property type="component" value="Unplaced"/>
</dbReference>
<dbReference type="Proteomes" id="UP000694725">
    <property type="component" value="Unplaced"/>
</dbReference>
<dbReference type="Proteomes" id="UP000694726">
    <property type="component" value="Unplaced"/>
</dbReference>
<dbReference type="Proteomes" id="UP000694727">
    <property type="component" value="Unplaced"/>
</dbReference>
<dbReference type="Proteomes" id="UP000694728">
    <property type="component" value="Unplaced"/>
</dbReference>
<dbReference type="GO" id="GO:0005576">
    <property type="term" value="C:extracellular region"/>
    <property type="evidence" value="ECO:0000250"/>
    <property type="project" value="UniProtKB"/>
</dbReference>
<dbReference type="GO" id="GO:0005615">
    <property type="term" value="C:extracellular space"/>
    <property type="evidence" value="ECO:0000250"/>
    <property type="project" value="UniProtKB"/>
</dbReference>
<dbReference type="GO" id="GO:0005518">
    <property type="term" value="F:collagen binding"/>
    <property type="evidence" value="ECO:0000250"/>
    <property type="project" value="UniProtKB"/>
</dbReference>
<dbReference type="GO" id="GO:0005507">
    <property type="term" value="F:copper ion binding"/>
    <property type="evidence" value="ECO:0007669"/>
    <property type="project" value="InterPro"/>
</dbReference>
<dbReference type="GO" id="GO:0004720">
    <property type="term" value="F:protein-lysine 6-oxidase activity"/>
    <property type="evidence" value="ECO:0000250"/>
    <property type="project" value="UniProtKB"/>
</dbReference>
<dbReference type="GO" id="GO:0048514">
    <property type="term" value="P:blood vessel morphogenesis"/>
    <property type="evidence" value="ECO:0000250"/>
    <property type="project" value="UniProtKB"/>
</dbReference>
<dbReference type="GO" id="GO:0018057">
    <property type="term" value="P:peptidyl-lysine oxidation"/>
    <property type="evidence" value="ECO:0000250"/>
    <property type="project" value="UniProtKB"/>
</dbReference>
<dbReference type="Gene3D" id="2.60.40.10">
    <property type="entry name" value="Immunoglobulins"/>
    <property type="match status" value="1"/>
</dbReference>
<dbReference type="InterPro" id="IPR013783">
    <property type="entry name" value="Ig-like_fold"/>
</dbReference>
<dbReference type="InterPro" id="IPR050912">
    <property type="entry name" value="LOX-like_protein"/>
</dbReference>
<dbReference type="InterPro" id="IPR001695">
    <property type="entry name" value="Lysyl_oxidase"/>
</dbReference>
<dbReference type="InterPro" id="IPR019828">
    <property type="entry name" value="Lysyl_oxidase_CS"/>
</dbReference>
<dbReference type="PANTHER" id="PTHR45817">
    <property type="entry name" value="LYSYL OXIDASE-LIKE-RELATED"/>
    <property type="match status" value="1"/>
</dbReference>
<dbReference type="PANTHER" id="PTHR45817:SF6">
    <property type="entry name" value="PROTEIN-LYSINE 6-OXIDASE"/>
    <property type="match status" value="1"/>
</dbReference>
<dbReference type="Pfam" id="PF01186">
    <property type="entry name" value="Lysyl_oxidase"/>
    <property type="match status" value="1"/>
</dbReference>
<dbReference type="PRINTS" id="PR00074">
    <property type="entry name" value="LYSYLOXIDASE"/>
</dbReference>
<dbReference type="PROSITE" id="PS00926">
    <property type="entry name" value="LYSYL_OXIDASE"/>
    <property type="match status" value="1"/>
</dbReference>
<organism>
    <name type="scientific">Sus scrofa</name>
    <name type="common">Pig</name>
    <dbReference type="NCBI Taxonomy" id="9823"/>
    <lineage>
        <taxon>Eukaryota</taxon>
        <taxon>Metazoa</taxon>
        <taxon>Chordata</taxon>
        <taxon>Craniata</taxon>
        <taxon>Vertebrata</taxon>
        <taxon>Euteleostomi</taxon>
        <taxon>Mammalia</taxon>
        <taxon>Eutheria</taxon>
        <taxon>Laurasiatheria</taxon>
        <taxon>Artiodactyla</taxon>
        <taxon>Suina</taxon>
        <taxon>Suidae</taxon>
        <taxon>Sus</taxon>
    </lineage>
</organism>